<keyword id="KW-0064">Aspartyl protease</keyword>
<keyword id="KW-0997">Cell inner membrane</keyword>
<keyword id="KW-1003">Cell membrane</keyword>
<keyword id="KW-0378">Hydrolase</keyword>
<keyword id="KW-0472">Membrane</keyword>
<keyword id="KW-0645">Protease</keyword>
<keyword id="KW-1185">Reference proteome</keyword>
<keyword id="KW-0812">Transmembrane</keyword>
<keyword id="KW-1133">Transmembrane helix</keyword>
<protein>
    <recommendedName>
        <fullName evidence="1">Lipoprotein signal peptidase</fullName>
        <ecNumber evidence="1">3.4.23.36</ecNumber>
    </recommendedName>
    <alternativeName>
        <fullName evidence="1">Prolipoprotein signal peptidase</fullName>
    </alternativeName>
    <alternativeName>
        <fullName evidence="1">Signal peptidase II</fullName>
        <shortName evidence="1">SPase II</shortName>
    </alternativeName>
</protein>
<dbReference type="EC" id="3.4.23.36" evidence="1"/>
<dbReference type="EMBL" id="L42023">
    <property type="protein sequence ID" value="AAC22667.1"/>
    <property type="molecule type" value="Genomic_DNA"/>
</dbReference>
<dbReference type="PIR" id="H64107">
    <property type="entry name" value="H64107"/>
</dbReference>
<dbReference type="RefSeq" id="NP_439167.1">
    <property type="nucleotide sequence ID" value="NC_000907.1"/>
</dbReference>
<dbReference type="SMR" id="P44975"/>
<dbReference type="STRING" id="71421.HI_1006"/>
<dbReference type="MEROPS" id="A08.001"/>
<dbReference type="EnsemblBacteria" id="AAC22667">
    <property type="protein sequence ID" value="AAC22667"/>
    <property type="gene ID" value="HI_1006"/>
</dbReference>
<dbReference type="KEGG" id="hin:HI_1006"/>
<dbReference type="PATRIC" id="fig|71421.8.peg.1049"/>
<dbReference type="eggNOG" id="COG0597">
    <property type="taxonomic scope" value="Bacteria"/>
</dbReference>
<dbReference type="HOGENOM" id="CLU_083252_4_0_6"/>
<dbReference type="OrthoDB" id="9810259at2"/>
<dbReference type="PhylomeDB" id="P44975"/>
<dbReference type="BioCyc" id="HINF71421:G1GJ1-1046-MONOMER"/>
<dbReference type="UniPathway" id="UPA00665"/>
<dbReference type="Proteomes" id="UP000000579">
    <property type="component" value="Chromosome"/>
</dbReference>
<dbReference type="GO" id="GO:0005886">
    <property type="term" value="C:plasma membrane"/>
    <property type="evidence" value="ECO:0000318"/>
    <property type="project" value="GO_Central"/>
</dbReference>
<dbReference type="GO" id="GO:0004190">
    <property type="term" value="F:aspartic-type endopeptidase activity"/>
    <property type="evidence" value="ECO:0007669"/>
    <property type="project" value="UniProtKB-UniRule"/>
</dbReference>
<dbReference type="GO" id="GO:0004175">
    <property type="term" value="F:endopeptidase activity"/>
    <property type="evidence" value="ECO:0000318"/>
    <property type="project" value="GO_Central"/>
</dbReference>
<dbReference type="GO" id="GO:0006508">
    <property type="term" value="P:proteolysis"/>
    <property type="evidence" value="ECO:0007669"/>
    <property type="project" value="UniProtKB-KW"/>
</dbReference>
<dbReference type="HAMAP" id="MF_00161">
    <property type="entry name" value="LspA"/>
    <property type="match status" value="1"/>
</dbReference>
<dbReference type="InterPro" id="IPR036259">
    <property type="entry name" value="MFS_trans_sf"/>
</dbReference>
<dbReference type="InterPro" id="IPR001872">
    <property type="entry name" value="Peptidase_A8"/>
</dbReference>
<dbReference type="NCBIfam" id="TIGR00077">
    <property type="entry name" value="lspA"/>
    <property type="match status" value="1"/>
</dbReference>
<dbReference type="PANTHER" id="PTHR33695">
    <property type="entry name" value="LIPOPROTEIN SIGNAL PEPTIDASE"/>
    <property type="match status" value="1"/>
</dbReference>
<dbReference type="PANTHER" id="PTHR33695:SF1">
    <property type="entry name" value="LIPOPROTEIN SIGNAL PEPTIDASE"/>
    <property type="match status" value="1"/>
</dbReference>
<dbReference type="Pfam" id="PF01252">
    <property type="entry name" value="Peptidase_A8"/>
    <property type="match status" value="1"/>
</dbReference>
<dbReference type="PRINTS" id="PR00781">
    <property type="entry name" value="LIPOSIGPTASE"/>
</dbReference>
<dbReference type="SUPFAM" id="SSF103473">
    <property type="entry name" value="MFS general substrate transporter"/>
    <property type="match status" value="1"/>
</dbReference>
<dbReference type="PROSITE" id="PS00855">
    <property type="entry name" value="SPASE_II"/>
    <property type="match status" value="1"/>
</dbReference>
<gene>
    <name evidence="1" type="primary">lspA</name>
    <name type="ordered locus">HI_1006</name>
</gene>
<sequence>MSKKSGLSFLWLSAVAFVIDLLTKYIVVQKFDLYESVNVLPVFNLTYVRNYGAAFSFLADHSGWQQYFFILLALAISGMLVYFLAKNNAEQKIQNSAYALIIGGALANMVDRAYNGFVVDFFDFYWDIYHYPVFNIADIAICIGAGLLVLDAFKSEKKKVQDKQVEKCGQK</sequence>
<organism>
    <name type="scientific">Haemophilus influenzae (strain ATCC 51907 / DSM 11121 / KW20 / Rd)</name>
    <dbReference type="NCBI Taxonomy" id="71421"/>
    <lineage>
        <taxon>Bacteria</taxon>
        <taxon>Pseudomonadati</taxon>
        <taxon>Pseudomonadota</taxon>
        <taxon>Gammaproteobacteria</taxon>
        <taxon>Pasteurellales</taxon>
        <taxon>Pasteurellaceae</taxon>
        <taxon>Haemophilus</taxon>
    </lineage>
</organism>
<accession>P44975</accession>
<reference key="1">
    <citation type="journal article" date="1995" name="Science">
        <title>Whole-genome random sequencing and assembly of Haemophilus influenzae Rd.</title>
        <authorList>
            <person name="Fleischmann R.D."/>
            <person name="Adams M.D."/>
            <person name="White O."/>
            <person name="Clayton R.A."/>
            <person name="Kirkness E.F."/>
            <person name="Kerlavage A.R."/>
            <person name="Bult C.J."/>
            <person name="Tomb J.-F."/>
            <person name="Dougherty B.A."/>
            <person name="Merrick J.M."/>
            <person name="McKenney K."/>
            <person name="Sutton G.G."/>
            <person name="FitzHugh W."/>
            <person name="Fields C.A."/>
            <person name="Gocayne J.D."/>
            <person name="Scott J.D."/>
            <person name="Shirley R."/>
            <person name="Liu L.-I."/>
            <person name="Glodek A."/>
            <person name="Kelley J.M."/>
            <person name="Weidman J.F."/>
            <person name="Phillips C.A."/>
            <person name="Spriggs T."/>
            <person name="Hedblom E."/>
            <person name="Cotton M.D."/>
            <person name="Utterback T.R."/>
            <person name="Hanna M.C."/>
            <person name="Nguyen D.T."/>
            <person name="Saudek D.M."/>
            <person name="Brandon R.C."/>
            <person name="Fine L.D."/>
            <person name="Fritchman J.L."/>
            <person name="Fuhrmann J.L."/>
            <person name="Geoghagen N.S.M."/>
            <person name="Gnehm C.L."/>
            <person name="McDonald L.A."/>
            <person name="Small K.V."/>
            <person name="Fraser C.M."/>
            <person name="Smith H.O."/>
            <person name="Venter J.C."/>
        </authorList>
    </citation>
    <scope>NUCLEOTIDE SEQUENCE [LARGE SCALE GENOMIC DNA]</scope>
    <source>
        <strain>ATCC 51907 / DSM 11121 / KW20 / Rd</strain>
    </source>
</reference>
<comment type="function">
    <text evidence="1">This protein specifically catalyzes the removal of signal peptides from prolipoproteins.</text>
</comment>
<comment type="catalytic activity">
    <reaction evidence="1">
        <text>Release of signal peptides from bacterial membrane prolipoproteins. Hydrolyzes -Xaa-Yaa-Zaa-|-(S,diacylglyceryl)Cys-, in which Xaa is hydrophobic (preferably Leu), and Yaa (Ala or Ser) and Zaa (Gly or Ala) have small, neutral side chains.</text>
        <dbReference type="EC" id="3.4.23.36"/>
    </reaction>
</comment>
<comment type="pathway">
    <text evidence="1">Protein modification; lipoprotein biosynthesis (signal peptide cleavage).</text>
</comment>
<comment type="subcellular location">
    <subcellularLocation>
        <location evidence="1">Cell inner membrane</location>
        <topology evidence="1">Multi-pass membrane protein</topology>
    </subcellularLocation>
</comment>
<comment type="similarity">
    <text evidence="1 2">Belongs to the peptidase A8 family.</text>
</comment>
<proteinExistence type="inferred from homology"/>
<name>LSPA_HAEIN</name>
<feature type="chain" id="PRO_0000178783" description="Lipoprotein signal peptidase">
    <location>
        <begin position="1"/>
        <end position="171"/>
    </location>
</feature>
<feature type="transmembrane region" description="Helical" evidence="1">
    <location>
        <begin position="8"/>
        <end position="28"/>
    </location>
</feature>
<feature type="transmembrane region" description="Helical" evidence="1">
    <location>
        <begin position="64"/>
        <end position="84"/>
    </location>
</feature>
<feature type="transmembrane region" description="Helical" evidence="1">
    <location>
        <begin position="99"/>
        <end position="119"/>
    </location>
</feature>
<feature type="transmembrane region" description="Helical" evidence="1">
    <location>
        <begin position="133"/>
        <end position="153"/>
    </location>
</feature>
<feature type="active site" evidence="1">
    <location>
        <position position="120"/>
    </location>
</feature>
<feature type="active site" evidence="1">
    <location>
        <position position="138"/>
    </location>
</feature>
<evidence type="ECO:0000255" key="1">
    <source>
        <dbReference type="HAMAP-Rule" id="MF_00161"/>
    </source>
</evidence>
<evidence type="ECO:0000305" key="2"/>